<name>Y2288_MYCTO</name>
<sequence>MSRRRPLIEPATVQVLAIAFTDSFSVSLHWPQREQGCRTAILAPMRRWCDGDVDGRKLLPPARRTGTQQRRIRPAAPRVYTTGDILRDRKGIAPWQEQREPGWAPFGWLHEPSGARCPKADGQSV</sequence>
<accession>P9WLE4</accession>
<accession>L0T9D6</accession>
<accession>P64975</accession>
<accession>Q50677</accession>
<keyword id="KW-1185">Reference proteome</keyword>
<protein>
    <recommendedName>
        <fullName>Uncharacterized protein MT2345.1</fullName>
    </recommendedName>
</protein>
<feature type="chain" id="PRO_0000427493" description="Uncharacterized protein MT2345.1">
    <location>
        <begin position="1"/>
        <end position="125"/>
    </location>
</feature>
<organism>
    <name type="scientific">Mycobacterium tuberculosis (strain CDC 1551 / Oshkosh)</name>
    <dbReference type="NCBI Taxonomy" id="83331"/>
    <lineage>
        <taxon>Bacteria</taxon>
        <taxon>Bacillati</taxon>
        <taxon>Actinomycetota</taxon>
        <taxon>Actinomycetes</taxon>
        <taxon>Mycobacteriales</taxon>
        <taxon>Mycobacteriaceae</taxon>
        <taxon>Mycobacterium</taxon>
        <taxon>Mycobacterium tuberculosis complex</taxon>
    </lineage>
</organism>
<reference key="1">
    <citation type="journal article" date="2002" name="J. Bacteriol.">
        <title>Whole-genome comparison of Mycobacterium tuberculosis clinical and laboratory strains.</title>
        <authorList>
            <person name="Fleischmann R.D."/>
            <person name="Alland D."/>
            <person name="Eisen J.A."/>
            <person name="Carpenter L."/>
            <person name="White O."/>
            <person name="Peterson J.D."/>
            <person name="DeBoy R.T."/>
            <person name="Dodson R.J."/>
            <person name="Gwinn M.L."/>
            <person name="Haft D.H."/>
            <person name="Hickey E.K."/>
            <person name="Kolonay J.F."/>
            <person name="Nelson W.C."/>
            <person name="Umayam L.A."/>
            <person name="Ermolaeva M.D."/>
            <person name="Salzberg S.L."/>
            <person name="Delcher A."/>
            <person name="Utterback T.R."/>
            <person name="Weidman J.F."/>
            <person name="Khouri H.M."/>
            <person name="Gill J."/>
            <person name="Mikula A."/>
            <person name="Bishai W."/>
            <person name="Jacobs W.R. Jr."/>
            <person name="Venter J.C."/>
            <person name="Fraser C.M."/>
        </authorList>
    </citation>
    <scope>NUCLEOTIDE SEQUENCE [LARGE SCALE GENOMIC DNA]</scope>
    <source>
        <strain>CDC 1551 / Oshkosh</strain>
    </source>
</reference>
<gene>
    <name type="ordered locus">MT2345.1</name>
</gene>
<dbReference type="EMBL" id="AE000516">
    <property type="protein sequence ID" value="AAK46630.1"/>
    <property type="molecule type" value="Genomic_DNA"/>
</dbReference>
<dbReference type="PIR" id="D70732">
    <property type="entry name" value="D70732"/>
</dbReference>
<dbReference type="RefSeq" id="WP_003900492.1">
    <property type="nucleotide sequence ID" value="NZ_KK341227.1"/>
</dbReference>
<dbReference type="KEGG" id="mtc:MT2345.1"/>
<dbReference type="HOGENOM" id="CLU_1990156_0_0_11"/>
<dbReference type="Proteomes" id="UP000001020">
    <property type="component" value="Chromosome"/>
</dbReference>
<proteinExistence type="predicted"/>